<sequence length="127" mass="14575">MVQIIKDTNEFKTFLTAAGHKLAVVQFSSKRCGPCKRMFPVFHAMSVKYQNVFFANVDVNNSPELAETCHIKTIPTFQMFKKSQKVTLFSRIKRIICCYRSGFMSNLIFEFCGADAKKLEAKTQELM</sequence>
<feature type="chain" id="PRO_0000120162" description="Thioredoxin domain-containing protein 8">
    <location>
        <begin position="1"/>
        <end position="127"/>
    </location>
</feature>
<feature type="domain" description="Thioredoxin">
    <location>
        <begin position="1"/>
        <end position="92"/>
    </location>
</feature>
<feature type="disulfide bond" description="Redox-active" evidence="1">
    <location>
        <begin position="32"/>
        <end position="35"/>
    </location>
</feature>
<feature type="splice variant" id="VSP_014333" description="In isoform 2." evidence="3 4">
    <original>IFEFCGADAKKLEAKTQELM</original>
    <variation>CLADDGNE</variation>
    <location>
        <begin position="108"/>
        <end position="127"/>
    </location>
</feature>
<feature type="sequence variant" id="VAR_057353" description="In dbSNP:rs7041938.">
    <original>N</original>
    <variation>H</variation>
    <location>
        <position position="60"/>
    </location>
</feature>
<keyword id="KW-0025">Alternative splicing</keyword>
<keyword id="KW-0963">Cytoplasm</keyword>
<keyword id="KW-0217">Developmental protein</keyword>
<keyword id="KW-0221">Differentiation</keyword>
<keyword id="KW-1015">Disulfide bond</keyword>
<keyword id="KW-0333">Golgi apparatus</keyword>
<keyword id="KW-0676">Redox-active center</keyword>
<keyword id="KW-1185">Reference proteome</keyword>
<keyword id="KW-0744">Spermatogenesis</keyword>
<evidence type="ECO:0000250" key="1"/>
<evidence type="ECO:0000269" key="2">
    <source>
    </source>
</evidence>
<evidence type="ECO:0000303" key="3">
    <source>
    </source>
</evidence>
<evidence type="ECO:0000303" key="4">
    <source>
    </source>
</evidence>
<evidence type="ECO:0000305" key="5"/>
<dbReference type="EMBL" id="AF305830">
    <property type="protein sequence ID" value="AAQ14501.1"/>
    <property type="molecule type" value="mRNA"/>
</dbReference>
<dbReference type="EMBL" id="AL158158">
    <property type="status" value="NOT_ANNOTATED_CDS"/>
    <property type="molecule type" value="Genomic_DNA"/>
</dbReference>
<dbReference type="EMBL" id="BC130549">
    <property type="protein sequence ID" value="AAI30550.1"/>
    <property type="molecule type" value="mRNA"/>
</dbReference>
<dbReference type="EMBL" id="BC130551">
    <property type="protein sequence ID" value="AAI30552.1"/>
    <property type="molecule type" value="mRNA"/>
</dbReference>
<dbReference type="CCDS" id="CCDS35104.1">
    <molecule id="Q6A555-2"/>
</dbReference>
<dbReference type="RefSeq" id="NP_001003936.1">
    <molecule id="Q6A555-2"/>
    <property type="nucleotide sequence ID" value="NM_001003936.4"/>
</dbReference>
<dbReference type="RefSeq" id="NP_001273875.1">
    <property type="nucleotide sequence ID" value="NM_001286946.1"/>
</dbReference>
<dbReference type="RefSeq" id="NP_001410960.1">
    <molecule id="Q6A555-1"/>
    <property type="nucleotide sequence ID" value="NM_001424031.1"/>
</dbReference>
<dbReference type="RefSeq" id="XP_016870070.1">
    <property type="nucleotide sequence ID" value="XM_017014581.1"/>
</dbReference>
<dbReference type="SMR" id="Q6A555"/>
<dbReference type="BioGRID" id="129086">
    <property type="interactions" value="6"/>
</dbReference>
<dbReference type="FunCoup" id="Q6A555">
    <property type="interactions" value="2"/>
</dbReference>
<dbReference type="IntAct" id="Q6A555">
    <property type="interactions" value="4"/>
</dbReference>
<dbReference type="STRING" id="9606.ENSP00000363634"/>
<dbReference type="PhosphoSitePlus" id="Q6A555"/>
<dbReference type="BioMuta" id="TXNDC8"/>
<dbReference type="DMDM" id="68566177"/>
<dbReference type="PaxDb" id="9606-ENSP00000363634"/>
<dbReference type="Antibodypedia" id="48474">
    <property type="antibodies" value="31 antibodies from 9 providers"/>
</dbReference>
<dbReference type="DNASU" id="255220"/>
<dbReference type="Ensembl" id="ENST00000374510.8">
    <molecule id="Q6A555-2"/>
    <property type="protein sequence ID" value="ENSP00000363634.4"/>
    <property type="gene ID" value="ENSG00000204193.12"/>
</dbReference>
<dbReference type="Ensembl" id="ENST00000374511.8">
    <molecule id="Q6A555-1"/>
    <property type="protein sequence ID" value="ENSP00000363635.3"/>
    <property type="gene ID" value="ENSG00000204193.12"/>
</dbReference>
<dbReference type="GeneID" id="255220"/>
<dbReference type="KEGG" id="hsa:255220"/>
<dbReference type="MANE-Select" id="ENST00000374511.8">
    <property type="protein sequence ID" value="ENSP00000363635.3"/>
    <property type="RefSeq nucleotide sequence ID" value="NM_001424031.1"/>
    <property type="RefSeq protein sequence ID" value="NP_001410960.1"/>
</dbReference>
<dbReference type="UCSC" id="uc004bes.5">
    <molecule id="Q6A555-1"/>
    <property type="organism name" value="human"/>
</dbReference>
<dbReference type="AGR" id="HGNC:31454"/>
<dbReference type="CTD" id="255220"/>
<dbReference type="GeneCards" id="TXNDC8"/>
<dbReference type="HGNC" id="HGNC:31454">
    <property type="gene designation" value="TXNDC8"/>
</dbReference>
<dbReference type="HPA" id="ENSG00000204193">
    <property type="expression patterns" value="Tissue enriched (testis)"/>
</dbReference>
<dbReference type="MIM" id="617789">
    <property type="type" value="gene"/>
</dbReference>
<dbReference type="neXtProt" id="NX_Q6A555"/>
<dbReference type="OpenTargets" id="ENSG00000204193"/>
<dbReference type="PharmGKB" id="PA134935003"/>
<dbReference type="VEuPathDB" id="HostDB:ENSG00000204193"/>
<dbReference type="eggNOG" id="KOG0907">
    <property type="taxonomic scope" value="Eukaryota"/>
</dbReference>
<dbReference type="GeneTree" id="ENSGT00940000162445"/>
<dbReference type="HOGENOM" id="CLU_090389_14_6_1"/>
<dbReference type="InParanoid" id="Q6A555"/>
<dbReference type="OMA" id="RIICCYG"/>
<dbReference type="OrthoDB" id="2121326at2759"/>
<dbReference type="PAN-GO" id="Q6A555">
    <property type="GO annotations" value="2 GO annotations based on evolutionary models"/>
</dbReference>
<dbReference type="PhylomeDB" id="Q6A555"/>
<dbReference type="TreeFam" id="TF321403"/>
<dbReference type="PathwayCommons" id="Q6A555"/>
<dbReference type="BioGRID-ORCS" id="255220">
    <property type="hits" value="7 hits in 1101 CRISPR screens"/>
</dbReference>
<dbReference type="GenomeRNAi" id="255220"/>
<dbReference type="Pharos" id="Q6A555">
    <property type="development level" value="Tbio"/>
</dbReference>
<dbReference type="PRO" id="PR:Q6A555"/>
<dbReference type="Proteomes" id="UP000005640">
    <property type="component" value="Chromosome 9"/>
</dbReference>
<dbReference type="RNAct" id="Q6A555">
    <property type="molecule type" value="protein"/>
</dbReference>
<dbReference type="Bgee" id="ENSG00000204193">
    <property type="expression patterns" value="Expressed in left testis and 53 other cell types or tissues"/>
</dbReference>
<dbReference type="ExpressionAtlas" id="Q6A555">
    <property type="expression patterns" value="baseline and differential"/>
</dbReference>
<dbReference type="GO" id="GO:0001669">
    <property type="term" value="C:acrosomal vesicle"/>
    <property type="evidence" value="ECO:0007669"/>
    <property type="project" value="Ensembl"/>
</dbReference>
<dbReference type="GO" id="GO:0005737">
    <property type="term" value="C:cytoplasm"/>
    <property type="evidence" value="ECO:0000314"/>
    <property type="project" value="UniProtKB"/>
</dbReference>
<dbReference type="GO" id="GO:0070062">
    <property type="term" value="C:extracellular exosome"/>
    <property type="evidence" value="ECO:0007005"/>
    <property type="project" value="UniProtKB"/>
</dbReference>
<dbReference type="GO" id="GO:0005794">
    <property type="term" value="C:Golgi apparatus"/>
    <property type="evidence" value="ECO:0000314"/>
    <property type="project" value="UniProtKB"/>
</dbReference>
<dbReference type="GO" id="GO:0030154">
    <property type="term" value="P:cell differentiation"/>
    <property type="evidence" value="ECO:0007669"/>
    <property type="project" value="UniProtKB-KW"/>
</dbReference>
<dbReference type="GO" id="GO:0007283">
    <property type="term" value="P:spermatogenesis"/>
    <property type="evidence" value="ECO:0000270"/>
    <property type="project" value="UniProtKB"/>
</dbReference>
<dbReference type="CDD" id="cd02947">
    <property type="entry name" value="TRX_family"/>
    <property type="match status" value="1"/>
</dbReference>
<dbReference type="FunFam" id="3.40.30.10:FF:000262">
    <property type="entry name" value="Thioredoxin domain containing 8"/>
    <property type="match status" value="1"/>
</dbReference>
<dbReference type="Gene3D" id="3.40.30.10">
    <property type="entry name" value="Glutaredoxin"/>
    <property type="match status" value="1"/>
</dbReference>
<dbReference type="InterPro" id="IPR036249">
    <property type="entry name" value="Thioredoxin-like_sf"/>
</dbReference>
<dbReference type="InterPro" id="IPR013766">
    <property type="entry name" value="Thioredoxin_domain"/>
</dbReference>
<dbReference type="PANTHER" id="PTHR46115">
    <property type="entry name" value="THIOREDOXIN-LIKE PROTEIN 1"/>
    <property type="match status" value="1"/>
</dbReference>
<dbReference type="Pfam" id="PF00085">
    <property type="entry name" value="Thioredoxin"/>
    <property type="match status" value="1"/>
</dbReference>
<dbReference type="SUPFAM" id="SSF52833">
    <property type="entry name" value="Thioredoxin-like"/>
    <property type="match status" value="1"/>
</dbReference>
<protein>
    <recommendedName>
        <fullName>Thioredoxin domain-containing protein 8</fullName>
    </recommendedName>
    <alternativeName>
        <fullName>Spermatid-specific thioredoxin-3</fullName>
        <shortName>Sptrx-3</shortName>
    </alternativeName>
    <alternativeName>
        <fullName>Thioredoxin-6</fullName>
    </alternativeName>
</protein>
<organism>
    <name type="scientific">Homo sapiens</name>
    <name type="common">Human</name>
    <dbReference type="NCBI Taxonomy" id="9606"/>
    <lineage>
        <taxon>Eukaryota</taxon>
        <taxon>Metazoa</taxon>
        <taxon>Chordata</taxon>
        <taxon>Craniata</taxon>
        <taxon>Vertebrata</taxon>
        <taxon>Euteleostomi</taxon>
        <taxon>Mammalia</taxon>
        <taxon>Eutheria</taxon>
        <taxon>Euarchontoglires</taxon>
        <taxon>Primates</taxon>
        <taxon>Haplorrhini</taxon>
        <taxon>Catarrhini</taxon>
        <taxon>Hominidae</taxon>
        <taxon>Homo</taxon>
    </lineage>
</organism>
<comment type="function">
    <text>May be required for post-translational modifications of proteins required for acrosomal biogenesis. May act by reducing disulfide bonds within the sperm.</text>
</comment>
<comment type="subcellular location">
    <subcellularLocation>
        <location evidence="2">Cytoplasm</location>
    </subcellularLocation>
    <subcellularLocation>
        <location evidence="2">Golgi apparatus</location>
    </subcellularLocation>
</comment>
<comment type="alternative products">
    <event type="alternative splicing"/>
    <isoform>
        <id>Q6A555-1</id>
        <name>1</name>
        <sequence type="displayed"/>
    </isoform>
    <isoform>
        <id>Q6A555-2</id>
        <name>2</name>
        <sequence type="described" ref="VSP_014333"/>
    </isoform>
</comment>
<comment type="tissue specificity">
    <text evidence="2">Testis-specific. Only expressed during spermiogenesis, prominently in the Golgi apparatus of pachytene spermatocytes and round and elongated spermatids, with a transient localization in the developing acrosome of round spermatids (at protein level).</text>
</comment>
<comment type="miscellaneous">
    <text>Increased levels, possibly caused by overexpression, are observed in morphologically abnormal spermatozoa from infertile men, suggesting that it may be used as a marker of aberrant spermatogenesis.</text>
</comment>
<comment type="similarity">
    <text evidence="5">Belongs to the thioredoxin family.</text>
</comment>
<reference key="1">
    <citation type="journal article" date="2004" name="J. Biol. Chem.">
        <title>Spermatocyte/spermatid-specific thioredoxin-3, a novel Golgi apparatus-associated thioredoxin, is a specific marker of aberrant spermatogenesis.</title>
        <authorList>
            <person name="Jimenez A."/>
            <person name="Zu W."/>
            <person name="Rawe V.Y."/>
            <person name="Pelto-Huikko M."/>
            <person name="Flickinger C.J."/>
            <person name="Sutovsky P."/>
            <person name="Gustafsson J.-A."/>
            <person name="Oko R."/>
            <person name="Miranda-Vizuete A."/>
        </authorList>
    </citation>
    <scope>NUCLEOTIDE SEQUENCE [MRNA] (ISOFORMS 1 AND 2)</scope>
    <scope>POSSIBLE FUNCTION</scope>
    <scope>SUBCELLULAR LOCATION</scope>
    <scope>TISSUE SPECIFICITY</scope>
</reference>
<reference key="2">
    <citation type="journal article" date="2004" name="Nature">
        <title>DNA sequence and analysis of human chromosome 9.</title>
        <authorList>
            <person name="Humphray S.J."/>
            <person name="Oliver K."/>
            <person name="Hunt A.R."/>
            <person name="Plumb R.W."/>
            <person name="Loveland J.E."/>
            <person name="Howe K.L."/>
            <person name="Andrews T.D."/>
            <person name="Searle S."/>
            <person name="Hunt S.E."/>
            <person name="Scott C.E."/>
            <person name="Jones M.C."/>
            <person name="Ainscough R."/>
            <person name="Almeida J.P."/>
            <person name="Ambrose K.D."/>
            <person name="Ashwell R.I.S."/>
            <person name="Babbage A.K."/>
            <person name="Babbage S."/>
            <person name="Bagguley C.L."/>
            <person name="Bailey J."/>
            <person name="Banerjee R."/>
            <person name="Barker D.J."/>
            <person name="Barlow K.F."/>
            <person name="Bates K."/>
            <person name="Beasley H."/>
            <person name="Beasley O."/>
            <person name="Bird C.P."/>
            <person name="Bray-Allen S."/>
            <person name="Brown A.J."/>
            <person name="Brown J.Y."/>
            <person name="Burford D."/>
            <person name="Burrill W."/>
            <person name="Burton J."/>
            <person name="Carder C."/>
            <person name="Carter N.P."/>
            <person name="Chapman J.C."/>
            <person name="Chen Y."/>
            <person name="Clarke G."/>
            <person name="Clark S.Y."/>
            <person name="Clee C.M."/>
            <person name="Clegg S."/>
            <person name="Collier R.E."/>
            <person name="Corby N."/>
            <person name="Crosier M."/>
            <person name="Cummings A.T."/>
            <person name="Davies J."/>
            <person name="Dhami P."/>
            <person name="Dunn M."/>
            <person name="Dutta I."/>
            <person name="Dyer L.W."/>
            <person name="Earthrowl M.E."/>
            <person name="Faulkner L."/>
            <person name="Fleming C.J."/>
            <person name="Frankish A."/>
            <person name="Frankland J.A."/>
            <person name="French L."/>
            <person name="Fricker D.G."/>
            <person name="Garner P."/>
            <person name="Garnett J."/>
            <person name="Ghori J."/>
            <person name="Gilbert J.G.R."/>
            <person name="Glison C."/>
            <person name="Grafham D.V."/>
            <person name="Gribble S."/>
            <person name="Griffiths C."/>
            <person name="Griffiths-Jones S."/>
            <person name="Grocock R."/>
            <person name="Guy J."/>
            <person name="Hall R.E."/>
            <person name="Hammond S."/>
            <person name="Harley J.L."/>
            <person name="Harrison E.S.I."/>
            <person name="Hart E.A."/>
            <person name="Heath P.D."/>
            <person name="Henderson C.D."/>
            <person name="Hopkins B.L."/>
            <person name="Howard P.J."/>
            <person name="Howden P.J."/>
            <person name="Huckle E."/>
            <person name="Johnson C."/>
            <person name="Johnson D."/>
            <person name="Joy A.A."/>
            <person name="Kay M."/>
            <person name="Keenan S."/>
            <person name="Kershaw J.K."/>
            <person name="Kimberley A.M."/>
            <person name="King A."/>
            <person name="Knights A."/>
            <person name="Laird G.K."/>
            <person name="Langford C."/>
            <person name="Lawlor S."/>
            <person name="Leongamornlert D.A."/>
            <person name="Leversha M."/>
            <person name="Lloyd C."/>
            <person name="Lloyd D.M."/>
            <person name="Lovell J."/>
            <person name="Martin S."/>
            <person name="Mashreghi-Mohammadi M."/>
            <person name="Matthews L."/>
            <person name="McLaren S."/>
            <person name="McLay K.E."/>
            <person name="McMurray A."/>
            <person name="Milne S."/>
            <person name="Nickerson T."/>
            <person name="Nisbett J."/>
            <person name="Nordsiek G."/>
            <person name="Pearce A.V."/>
            <person name="Peck A.I."/>
            <person name="Porter K.M."/>
            <person name="Pandian R."/>
            <person name="Pelan S."/>
            <person name="Phillimore B."/>
            <person name="Povey S."/>
            <person name="Ramsey Y."/>
            <person name="Rand V."/>
            <person name="Scharfe M."/>
            <person name="Sehra H.K."/>
            <person name="Shownkeen R."/>
            <person name="Sims S.K."/>
            <person name="Skuce C.D."/>
            <person name="Smith M."/>
            <person name="Steward C.A."/>
            <person name="Swarbreck D."/>
            <person name="Sycamore N."/>
            <person name="Tester J."/>
            <person name="Thorpe A."/>
            <person name="Tracey A."/>
            <person name="Tromans A."/>
            <person name="Thomas D.W."/>
            <person name="Wall M."/>
            <person name="Wallis J.M."/>
            <person name="West A.P."/>
            <person name="Whitehead S.L."/>
            <person name="Willey D.L."/>
            <person name="Williams S.A."/>
            <person name="Wilming L."/>
            <person name="Wray P.W."/>
            <person name="Young L."/>
            <person name="Ashurst J.L."/>
            <person name="Coulson A."/>
            <person name="Blocker H."/>
            <person name="Durbin R.M."/>
            <person name="Sulston J.E."/>
            <person name="Hubbard T."/>
            <person name="Jackson M.J."/>
            <person name="Bentley D.R."/>
            <person name="Beck S."/>
            <person name="Rogers J."/>
            <person name="Dunham I."/>
        </authorList>
    </citation>
    <scope>NUCLEOTIDE SEQUENCE [LARGE SCALE GENOMIC DNA]</scope>
</reference>
<reference key="3">
    <citation type="journal article" date="2004" name="Genome Res.">
        <title>The status, quality, and expansion of the NIH full-length cDNA project: the Mammalian Gene Collection (MGC).</title>
        <authorList>
            <consortium name="The MGC Project Team"/>
        </authorList>
    </citation>
    <scope>NUCLEOTIDE SEQUENCE [LARGE SCALE MRNA] (ISOFORM 2)</scope>
    <source>
        <tissue>Lymph</tissue>
    </source>
</reference>
<proteinExistence type="evidence at protein level"/>
<name>TXND8_HUMAN</name>
<gene>
    <name type="primary">TXNDC8</name>
    <name type="synonym">SPTRX3</name>
    <name type="synonym">TRX6</name>
</gene>
<accession>Q6A555</accession>
<accession>A1L4I2</accession>
<accession>A6NDK7</accession>
<accession>Q5T934</accession>